<reference key="1">
    <citation type="journal article" date="2011" name="Stand. Genomic Sci.">
        <title>Complete genome sequence of Rhodospirillum rubrum type strain (S1).</title>
        <authorList>
            <person name="Munk A.C."/>
            <person name="Copeland A."/>
            <person name="Lucas S."/>
            <person name="Lapidus A."/>
            <person name="Del Rio T.G."/>
            <person name="Barry K."/>
            <person name="Detter J.C."/>
            <person name="Hammon N."/>
            <person name="Israni S."/>
            <person name="Pitluck S."/>
            <person name="Brettin T."/>
            <person name="Bruce D."/>
            <person name="Han C."/>
            <person name="Tapia R."/>
            <person name="Gilna P."/>
            <person name="Schmutz J."/>
            <person name="Larimer F."/>
            <person name="Land M."/>
            <person name="Kyrpides N.C."/>
            <person name="Mavromatis K."/>
            <person name="Richardson P."/>
            <person name="Rohde M."/>
            <person name="Goeker M."/>
            <person name="Klenk H.P."/>
            <person name="Zhang Y."/>
            <person name="Roberts G.P."/>
            <person name="Reslewic S."/>
            <person name="Schwartz D.C."/>
        </authorList>
    </citation>
    <scope>NUCLEOTIDE SEQUENCE [LARGE SCALE GENOMIC DNA]</scope>
    <source>
        <strain>ATCC 11170 / ATH 1.1.1 / DSM 467 / LMG 4362 / NCIMB 8255 / S1</strain>
    </source>
</reference>
<feature type="signal peptide" evidence="1">
    <location>
        <begin position="1"/>
        <end position="31"/>
    </location>
</feature>
<feature type="chain" id="PRO_0000259082" description="Tol-Pal system protein TolB" evidence="1">
    <location>
        <begin position="32"/>
        <end position="443"/>
    </location>
</feature>
<feature type="region of interest" description="Disordered" evidence="2">
    <location>
        <begin position="423"/>
        <end position="443"/>
    </location>
</feature>
<feature type="compositionally biased region" description="Polar residues" evidence="2">
    <location>
        <begin position="423"/>
        <end position="432"/>
    </location>
</feature>
<comment type="function">
    <text evidence="1">Part of the Tol-Pal system, which plays a role in outer membrane invagination during cell division and is important for maintaining outer membrane integrity.</text>
</comment>
<comment type="subunit">
    <text evidence="1">The Tol-Pal system is composed of five core proteins: the inner membrane proteins TolA, TolQ and TolR, the periplasmic protein TolB and the outer membrane protein Pal. They form a network linking the inner and outer membranes and the peptidoglycan layer.</text>
</comment>
<comment type="subcellular location">
    <subcellularLocation>
        <location evidence="1">Periplasm</location>
    </subcellularLocation>
</comment>
<comment type="similarity">
    <text evidence="1">Belongs to the TolB family.</text>
</comment>
<sequence>MTRLAKGKWRSTLGAMMALAVMVAAIPQARAELVIDITRGVREPMPIAIPVFGGTDAQSSAMGRDVVGVVSNDLQGSGLFRVLDPAAYIQSLPNLAVQPQFADWRAINAQALVQGEVQPQGDGRLRVAFRLWDVFSGQQVVGRAFLTQGDNWRRVSHIIADEIYKAITGEEGYFDTRVVYVAETGPKTNRVKKLAIMDQDGANQRNLTNGESMVLTPRFSPTAQEITYLSYYNSVPRVYLFNIETGRRELLGDFPGMTFAPRFSPDGNKVIMSMALDGNTEIYEMDLRTRRSSRLTNHPSIDTSPSYAPDGRQITFNSDRGGAQQIYVMNADGSGVQRISFGDGRYATPVWSPRGDLIAFTKLKGGRFFIGAMRPDGSGEKILTEGFLVEGPTWAPNGRVLMFFRQDPNGRTTLHSIDVTGYNERQISTPTEASDPAWSPLLP</sequence>
<keyword id="KW-0131">Cell cycle</keyword>
<keyword id="KW-0132">Cell division</keyword>
<keyword id="KW-0574">Periplasm</keyword>
<keyword id="KW-1185">Reference proteome</keyword>
<keyword id="KW-0732">Signal</keyword>
<gene>
    <name evidence="1" type="primary">tolB</name>
    <name type="ordered locus">Rru_A1094</name>
</gene>
<protein>
    <recommendedName>
        <fullName evidence="1">Tol-Pal system protein TolB</fullName>
    </recommendedName>
</protein>
<dbReference type="EMBL" id="CP000230">
    <property type="protein sequence ID" value="ABC21895.1"/>
    <property type="molecule type" value="Genomic_DNA"/>
</dbReference>
<dbReference type="RefSeq" id="WP_011388849.1">
    <property type="nucleotide sequence ID" value="NC_007643.1"/>
</dbReference>
<dbReference type="RefSeq" id="YP_426182.1">
    <property type="nucleotide sequence ID" value="NC_007643.1"/>
</dbReference>
<dbReference type="SMR" id="Q2RVF0"/>
<dbReference type="STRING" id="269796.Rru_A1094"/>
<dbReference type="DNASU" id="3833401"/>
<dbReference type="EnsemblBacteria" id="ABC21895">
    <property type="protein sequence ID" value="ABC21895"/>
    <property type="gene ID" value="Rru_A1094"/>
</dbReference>
<dbReference type="KEGG" id="rru:Rru_A1094"/>
<dbReference type="PATRIC" id="fig|269796.9.peg.1152"/>
<dbReference type="eggNOG" id="COG0823">
    <property type="taxonomic scope" value="Bacteria"/>
</dbReference>
<dbReference type="HOGENOM" id="CLU_047123_0_0_5"/>
<dbReference type="PhylomeDB" id="Q2RVF0"/>
<dbReference type="Proteomes" id="UP000001929">
    <property type="component" value="Chromosome"/>
</dbReference>
<dbReference type="GO" id="GO:0042597">
    <property type="term" value="C:periplasmic space"/>
    <property type="evidence" value="ECO:0007669"/>
    <property type="project" value="UniProtKB-SubCell"/>
</dbReference>
<dbReference type="GO" id="GO:0051301">
    <property type="term" value="P:cell division"/>
    <property type="evidence" value="ECO:0007669"/>
    <property type="project" value="UniProtKB-UniRule"/>
</dbReference>
<dbReference type="GO" id="GO:0017038">
    <property type="term" value="P:protein import"/>
    <property type="evidence" value="ECO:0007669"/>
    <property type="project" value="InterPro"/>
</dbReference>
<dbReference type="Gene3D" id="2.120.10.30">
    <property type="entry name" value="TolB, C-terminal domain"/>
    <property type="match status" value="1"/>
</dbReference>
<dbReference type="Gene3D" id="3.40.50.10070">
    <property type="entry name" value="TolB, N-terminal domain"/>
    <property type="match status" value="1"/>
</dbReference>
<dbReference type="HAMAP" id="MF_00671">
    <property type="entry name" value="TolB"/>
    <property type="match status" value="1"/>
</dbReference>
<dbReference type="InterPro" id="IPR011042">
    <property type="entry name" value="6-blade_b-propeller_TolB-like"/>
</dbReference>
<dbReference type="InterPro" id="IPR011659">
    <property type="entry name" value="PD40"/>
</dbReference>
<dbReference type="InterPro" id="IPR014167">
    <property type="entry name" value="Tol-Pal_TolB"/>
</dbReference>
<dbReference type="InterPro" id="IPR007195">
    <property type="entry name" value="TolB_N"/>
</dbReference>
<dbReference type="NCBIfam" id="TIGR02800">
    <property type="entry name" value="propeller_TolB"/>
    <property type="match status" value="1"/>
</dbReference>
<dbReference type="PANTHER" id="PTHR36842:SF1">
    <property type="entry name" value="PROTEIN TOLB"/>
    <property type="match status" value="1"/>
</dbReference>
<dbReference type="PANTHER" id="PTHR36842">
    <property type="entry name" value="PROTEIN TOLB HOMOLOG"/>
    <property type="match status" value="1"/>
</dbReference>
<dbReference type="Pfam" id="PF07676">
    <property type="entry name" value="PD40"/>
    <property type="match status" value="3"/>
</dbReference>
<dbReference type="Pfam" id="PF04052">
    <property type="entry name" value="TolB_N"/>
    <property type="match status" value="1"/>
</dbReference>
<dbReference type="SUPFAM" id="SSF52964">
    <property type="entry name" value="TolB, N-terminal domain"/>
    <property type="match status" value="1"/>
</dbReference>
<dbReference type="SUPFAM" id="SSF69304">
    <property type="entry name" value="Tricorn protease N-terminal domain"/>
    <property type="match status" value="1"/>
</dbReference>
<accession>Q2RVF0</accession>
<name>TOLB_RHORT</name>
<organism>
    <name type="scientific">Rhodospirillum rubrum (strain ATCC 11170 / ATH 1.1.1 / DSM 467 / LMG 4362 / NCIMB 8255 / S1)</name>
    <dbReference type="NCBI Taxonomy" id="269796"/>
    <lineage>
        <taxon>Bacteria</taxon>
        <taxon>Pseudomonadati</taxon>
        <taxon>Pseudomonadota</taxon>
        <taxon>Alphaproteobacteria</taxon>
        <taxon>Rhodospirillales</taxon>
        <taxon>Rhodospirillaceae</taxon>
        <taxon>Rhodospirillum</taxon>
    </lineage>
</organism>
<proteinExistence type="inferred from homology"/>
<evidence type="ECO:0000255" key="1">
    <source>
        <dbReference type="HAMAP-Rule" id="MF_00671"/>
    </source>
</evidence>
<evidence type="ECO:0000256" key="2">
    <source>
        <dbReference type="SAM" id="MobiDB-lite"/>
    </source>
</evidence>